<protein>
    <recommendedName>
        <fullName evidence="1">Adenosylhomocysteinase</fullName>
        <ecNumber evidence="1">3.13.2.1</ecNumber>
    </recommendedName>
    <alternativeName>
        <fullName evidence="1">S-adenosyl-L-homocysteine hydrolase</fullName>
        <shortName evidence="1">AdoHcyase</shortName>
    </alternativeName>
</protein>
<proteinExistence type="inferred from homology"/>
<keyword id="KW-0963">Cytoplasm</keyword>
<keyword id="KW-0378">Hydrolase</keyword>
<keyword id="KW-0520">NAD</keyword>
<keyword id="KW-0554">One-carbon metabolism</keyword>
<dbReference type="EC" id="3.13.2.1" evidence="1"/>
<dbReference type="EMBL" id="AM774415">
    <property type="protein sequence ID" value="CAP14671.1"/>
    <property type="molecule type" value="Genomic_DNA"/>
</dbReference>
<dbReference type="RefSeq" id="WP_010903672.1">
    <property type="nucleotide sequence ID" value="NC_010364.1"/>
</dbReference>
<dbReference type="SMR" id="B0R7F2"/>
<dbReference type="EnsemblBacteria" id="CAP14671">
    <property type="protein sequence ID" value="CAP14671"/>
    <property type="gene ID" value="OE_4159F"/>
</dbReference>
<dbReference type="KEGG" id="hsl:OE_4159F"/>
<dbReference type="HOGENOM" id="CLU_025194_0_2_2"/>
<dbReference type="PhylomeDB" id="B0R7F2"/>
<dbReference type="UniPathway" id="UPA00314">
    <property type="reaction ID" value="UER00076"/>
</dbReference>
<dbReference type="Proteomes" id="UP000001321">
    <property type="component" value="Chromosome"/>
</dbReference>
<dbReference type="GO" id="GO:0005829">
    <property type="term" value="C:cytosol"/>
    <property type="evidence" value="ECO:0007669"/>
    <property type="project" value="TreeGrafter"/>
</dbReference>
<dbReference type="GO" id="GO:0004013">
    <property type="term" value="F:adenosylhomocysteinase activity"/>
    <property type="evidence" value="ECO:0007669"/>
    <property type="project" value="UniProtKB-UniRule"/>
</dbReference>
<dbReference type="GO" id="GO:0071269">
    <property type="term" value="P:L-homocysteine biosynthetic process"/>
    <property type="evidence" value="ECO:0007669"/>
    <property type="project" value="UniProtKB-UniRule"/>
</dbReference>
<dbReference type="GO" id="GO:0006730">
    <property type="term" value="P:one-carbon metabolic process"/>
    <property type="evidence" value="ECO:0007669"/>
    <property type="project" value="UniProtKB-KW"/>
</dbReference>
<dbReference type="GO" id="GO:0033353">
    <property type="term" value="P:S-adenosylmethionine cycle"/>
    <property type="evidence" value="ECO:0007669"/>
    <property type="project" value="TreeGrafter"/>
</dbReference>
<dbReference type="CDD" id="cd00401">
    <property type="entry name" value="SAHH"/>
    <property type="match status" value="1"/>
</dbReference>
<dbReference type="Gene3D" id="3.40.50.1480">
    <property type="entry name" value="Adenosylhomocysteinase-like"/>
    <property type="match status" value="1"/>
</dbReference>
<dbReference type="Gene3D" id="3.40.50.720">
    <property type="entry name" value="NAD(P)-binding Rossmann-like Domain"/>
    <property type="match status" value="1"/>
</dbReference>
<dbReference type="HAMAP" id="MF_00563">
    <property type="entry name" value="AdoHcyase"/>
    <property type="match status" value="1"/>
</dbReference>
<dbReference type="InterPro" id="IPR042172">
    <property type="entry name" value="Adenosylhomocyst_ase-like_sf"/>
</dbReference>
<dbReference type="InterPro" id="IPR000043">
    <property type="entry name" value="Adenosylhomocysteinase-like"/>
</dbReference>
<dbReference type="InterPro" id="IPR015878">
    <property type="entry name" value="Ado_hCys_hydrolase_NAD-bd"/>
</dbReference>
<dbReference type="InterPro" id="IPR036291">
    <property type="entry name" value="NAD(P)-bd_dom_sf"/>
</dbReference>
<dbReference type="InterPro" id="IPR020082">
    <property type="entry name" value="S-Ado-L-homoCys_hydrolase_CS"/>
</dbReference>
<dbReference type="NCBIfam" id="TIGR00936">
    <property type="entry name" value="ahcY"/>
    <property type="match status" value="1"/>
</dbReference>
<dbReference type="NCBIfam" id="NF004005">
    <property type="entry name" value="PRK05476.2-3"/>
    <property type="match status" value="1"/>
</dbReference>
<dbReference type="PANTHER" id="PTHR23420">
    <property type="entry name" value="ADENOSYLHOMOCYSTEINASE"/>
    <property type="match status" value="1"/>
</dbReference>
<dbReference type="PANTHER" id="PTHR23420:SF0">
    <property type="entry name" value="ADENOSYLHOMOCYSTEINASE"/>
    <property type="match status" value="1"/>
</dbReference>
<dbReference type="Pfam" id="PF05221">
    <property type="entry name" value="AdoHcyase"/>
    <property type="match status" value="1"/>
</dbReference>
<dbReference type="Pfam" id="PF00670">
    <property type="entry name" value="AdoHcyase_NAD"/>
    <property type="match status" value="1"/>
</dbReference>
<dbReference type="PIRSF" id="PIRSF001109">
    <property type="entry name" value="Ad_hcy_hydrolase"/>
    <property type="match status" value="1"/>
</dbReference>
<dbReference type="SMART" id="SM00996">
    <property type="entry name" value="AdoHcyase"/>
    <property type="match status" value="1"/>
</dbReference>
<dbReference type="SMART" id="SM00997">
    <property type="entry name" value="AdoHcyase_NAD"/>
    <property type="match status" value="1"/>
</dbReference>
<dbReference type="SUPFAM" id="SSF52283">
    <property type="entry name" value="Formate/glycerate dehydrogenase catalytic domain-like"/>
    <property type="match status" value="1"/>
</dbReference>
<dbReference type="SUPFAM" id="SSF51735">
    <property type="entry name" value="NAD(P)-binding Rossmann-fold domains"/>
    <property type="match status" value="1"/>
</dbReference>
<dbReference type="PROSITE" id="PS00738">
    <property type="entry name" value="ADOHCYASE_1"/>
    <property type="match status" value="1"/>
</dbReference>
<dbReference type="PROSITE" id="PS00739">
    <property type="entry name" value="ADOHCYASE_2"/>
    <property type="match status" value="1"/>
</dbReference>
<feature type="chain" id="PRO_0000416094" description="Adenosylhomocysteinase">
    <location>
        <begin position="1"/>
        <end position="427"/>
    </location>
</feature>
<feature type="binding site" evidence="1">
    <location>
        <position position="132"/>
    </location>
    <ligand>
        <name>substrate</name>
    </ligand>
</feature>
<feature type="binding site" evidence="1">
    <location>
        <position position="157"/>
    </location>
    <ligand>
        <name>substrate</name>
    </ligand>
</feature>
<feature type="binding site" evidence="1">
    <location>
        <begin position="158"/>
        <end position="160"/>
    </location>
    <ligand>
        <name>NAD(+)</name>
        <dbReference type="ChEBI" id="CHEBI:57540"/>
    </ligand>
</feature>
<feature type="binding site" evidence="1">
    <location>
        <position position="187"/>
    </location>
    <ligand>
        <name>substrate</name>
    </ligand>
</feature>
<feature type="binding site" evidence="1">
    <location>
        <position position="191"/>
    </location>
    <ligand>
        <name>substrate</name>
    </ligand>
</feature>
<feature type="binding site" evidence="1">
    <location>
        <position position="192"/>
    </location>
    <ligand>
        <name>NAD(+)</name>
        <dbReference type="ChEBI" id="CHEBI:57540"/>
    </ligand>
</feature>
<feature type="binding site" evidence="1">
    <location>
        <begin position="221"/>
        <end position="226"/>
    </location>
    <ligand>
        <name>NAD(+)</name>
        <dbReference type="ChEBI" id="CHEBI:57540"/>
    </ligand>
</feature>
<feature type="binding site" evidence="1">
    <location>
        <position position="244"/>
    </location>
    <ligand>
        <name>NAD(+)</name>
        <dbReference type="ChEBI" id="CHEBI:57540"/>
    </ligand>
</feature>
<feature type="binding site" evidence="1">
    <location>
        <position position="279"/>
    </location>
    <ligand>
        <name>NAD(+)</name>
        <dbReference type="ChEBI" id="CHEBI:57540"/>
    </ligand>
</feature>
<feature type="binding site" evidence="1">
    <location>
        <begin position="300"/>
        <end position="302"/>
    </location>
    <ligand>
        <name>NAD(+)</name>
        <dbReference type="ChEBI" id="CHEBI:57540"/>
    </ligand>
</feature>
<feature type="binding site" evidence="1">
    <location>
        <position position="347"/>
    </location>
    <ligand>
        <name>NAD(+)</name>
        <dbReference type="ChEBI" id="CHEBI:57540"/>
    </ligand>
</feature>
<accession>B0R7F2</accession>
<reference key="1">
    <citation type="journal article" date="2008" name="Genomics">
        <title>Evolution in the laboratory: the genome of Halobacterium salinarum strain R1 compared to that of strain NRC-1.</title>
        <authorList>
            <person name="Pfeiffer F."/>
            <person name="Schuster S.C."/>
            <person name="Broicher A."/>
            <person name="Falb M."/>
            <person name="Palm P."/>
            <person name="Rodewald K."/>
            <person name="Ruepp A."/>
            <person name="Soppa J."/>
            <person name="Tittor J."/>
            <person name="Oesterhelt D."/>
        </authorList>
    </citation>
    <scope>NUCLEOTIDE SEQUENCE [LARGE SCALE GENOMIC DNA]</scope>
    <source>
        <strain>ATCC 29341 / DSM 671 / R1</strain>
    </source>
</reference>
<comment type="function">
    <text evidence="1">May play a key role in the regulation of the intracellular concentration of adenosylhomocysteine.</text>
</comment>
<comment type="catalytic activity">
    <reaction evidence="1">
        <text>S-adenosyl-L-homocysteine + H2O = L-homocysteine + adenosine</text>
        <dbReference type="Rhea" id="RHEA:21708"/>
        <dbReference type="ChEBI" id="CHEBI:15377"/>
        <dbReference type="ChEBI" id="CHEBI:16335"/>
        <dbReference type="ChEBI" id="CHEBI:57856"/>
        <dbReference type="ChEBI" id="CHEBI:58199"/>
        <dbReference type="EC" id="3.13.2.1"/>
    </reaction>
</comment>
<comment type="cofactor">
    <cofactor evidence="1">
        <name>NAD(+)</name>
        <dbReference type="ChEBI" id="CHEBI:57540"/>
    </cofactor>
    <text evidence="1">Binds 1 NAD(+) per subunit.</text>
</comment>
<comment type="pathway">
    <text evidence="1">Amino-acid biosynthesis; L-homocysteine biosynthesis; L-homocysteine from S-adenosyl-L-homocysteine: step 1/1.</text>
</comment>
<comment type="subcellular location">
    <subcellularLocation>
        <location evidence="1">Cytoplasm</location>
    </subcellularLocation>
</comment>
<comment type="similarity">
    <text evidence="1 2">Belongs to the adenosylhomocysteinase family.</text>
</comment>
<evidence type="ECO:0000255" key="1">
    <source>
        <dbReference type="HAMAP-Rule" id="MF_00563"/>
    </source>
</evidence>
<evidence type="ECO:0000305" key="2"/>
<sequence length="427" mass="45907">MTTAPAISSRLDDPESARETGRAKIDWAFEHMPILSALREEFDANQPLAGETIGMAMHVEAKTAALVETMADAGAEIAITGCNPLSTHDGVSAALDAHESITSYAERGAEGEAYYDAIDAVLAHEPTVTVDDGGDLVFRVHEDHPELIDTIIGGTEETTTGVHRLRAMDDDDALEYPVFAVNDTPMKRLFDNVHGTGESALANIAMTTNLSWAGKDVVVAGYGDCGRGVAKKAAGQNANVIVTEVEPRRALEAHMEGYDVMPMAEAAEVGDVFLTTTGNKNVITRAHFERMDDGVVLANAGHFDVEVNLDHLSELAVSEREAREGVREYELADGRRLNVLAEGRLVNLASPIGLGHPVGVMDQSFGVQAVCVRELVANREEYAAGVHNVPDELDIEIAEIKLAAEGVEYDALTDDQAEYMDSWQHGT</sequence>
<name>SAHH_HALS3</name>
<gene>
    <name evidence="1" type="primary">ahcY</name>
    <name type="ordered locus">OE_4159F</name>
</gene>
<organism>
    <name type="scientific">Halobacterium salinarum (strain ATCC 29341 / DSM 671 / R1)</name>
    <dbReference type="NCBI Taxonomy" id="478009"/>
    <lineage>
        <taxon>Archaea</taxon>
        <taxon>Methanobacteriati</taxon>
        <taxon>Methanobacteriota</taxon>
        <taxon>Stenosarchaea group</taxon>
        <taxon>Halobacteria</taxon>
        <taxon>Halobacteriales</taxon>
        <taxon>Halobacteriaceae</taxon>
        <taxon>Halobacterium</taxon>
        <taxon>Halobacterium salinarum NRC-34001</taxon>
    </lineage>
</organism>